<accession>Q5HBD0</accession>
<accession>Q5FDS3</accession>
<dbReference type="EMBL" id="CR767821">
    <property type="protein sequence ID" value="CAH58121.1"/>
    <property type="molecule type" value="Genomic_DNA"/>
</dbReference>
<dbReference type="EMBL" id="CR925678">
    <property type="protein sequence ID" value="CAI26906.1"/>
    <property type="molecule type" value="Genomic_DNA"/>
</dbReference>
<dbReference type="RefSeq" id="WP_011155081.1">
    <property type="nucleotide sequence ID" value="NC_005295.2"/>
</dbReference>
<dbReference type="SMR" id="Q5HBD0"/>
<dbReference type="GeneID" id="33058008"/>
<dbReference type="KEGG" id="eru:Erum3990"/>
<dbReference type="KEGG" id="erw:ERWE_CDS_04120"/>
<dbReference type="eggNOG" id="COG0224">
    <property type="taxonomic scope" value="Bacteria"/>
</dbReference>
<dbReference type="HOGENOM" id="CLU_050669_4_0_5"/>
<dbReference type="Proteomes" id="UP000001021">
    <property type="component" value="Chromosome"/>
</dbReference>
<dbReference type="GO" id="GO:0005886">
    <property type="term" value="C:plasma membrane"/>
    <property type="evidence" value="ECO:0007669"/>
    <property type="project" value="UniProtKB-SubCell"/>
</dbReference>
<dbReference type="GO" id="GO:0045259">
    <property type="term" value="C:proton-transporting ATP synthase complex"/>
    <property type="evidence" value="ECO:0007669"/>
    <property type="project" value="UniProtKB-KW"/>
</dbReference>
<dbReference type="GO" id="GO:0005524">
    <property type="term" value="F:ATP binding"/>
    <property type="evidence" value="ECO:0007669"/>
    <property type="project" value="UniProtKB-UniRule"/>
</dbReference>
<dbReference type="GO" id="GO:0046933">
    <property type="term" value="F:proton-transporting ATP synthase activity, rotational mechanism"/>
    <property type="evidence" value="ECO:0007669"/>
    <property type="project" value="UniProtKB-UniRule"/>
</dbReference>
<dbReference type="GO" id="GO:0042777">
    <property type="term" value="P:proton motive force-driven plasma membrane ATP synthesis"/>
    <property type="evidence" value="ECO:0007669"/>
    <property type="project" value="UniProtKB-UniRule"/>
</dbReference>
<dbReference type="CDD" id="cd12151">
    <property type="entry name" value="F1-ATPase_gamma"/>
    <property type="match status" value="1"/>
</dbReference>
<dbReference type="Gene3D" id="3.40.1380.10">
    <property type="match status" value="1"/>
</dbReference>
<dbReference type="Gene3D" id="1.10.287.80">
    <property type="entry name" value="ATP synthase, gamma subunit, helix hairpin domain"/>
    <property type="match status" value="1"/>
</dbReference>
<dbReference type="HAMAP" id="MF_00815">
    <property type="entry name" value="ATP_synth_gamma_bact"/>
    <property type="match status" value="1"/>
</dbReference>
<dbReference type="InterPro" id="IPR035968">
    <property type="entry name" value="ATP_synth_F1_ATPase_gsu"/>
</dbReference>
<dbReference type="InterPro" id="IPR000131">
    <property type="entry name" value="ATP_synth_F1_gsu"/>
</dbReference>
<dbReference type="NCBIfam" id="TIGR01146">
    <property type="entry name" value="ATPsyn_F1gamma"/>
    <property type="match status" value="1"/>
</dbReference>
<dbReference type="PANTHER" id="PTHR11693">
    <property type="entry name" value="ATP SYNTHASE GAMMA CHAIN"/>
    <property type="match status" value="1"/>
</dbReference>
<dbReference type="PANTHER" id="PTHR11693:SF22">
    <property type="entry name" value="ATP SYNTHASE SUBUNIT GAMMA, MITOCHONDRIAL"/>
    <property type="match status" value="1"/>
</dbReference>
<dbReference type="Pfam" id="PF00231">
    <property type="entry name" value="ATP-synt"/>
    <property type="match status" value="1"/>
</dbReference>
<dbReference type="PRINTS" id="PR00126">
    <property type="entry name" value="ATPASEGAMMA"/>
</dbReference>
<dbReference type="SUPFAM" id="SSF52943">
    <property type="entry name" value="ATP synthase (F1-ATPase), gamma subunit"/>
    <property type="match status" value="1"/>
</dbReference>
<gene>
    <name evidence="1" type="primary">atpG</name>
    <name type="ordered locus">Erum3990</name>
    <name type="ordered locus">ERWE_CDS_04120</name>
</gene>
<evidence type="ECO:0000255" key="1">
    <source>
        <dbReference type="HAMAP-Rule" id="MF_00815"/>
    </source>
</evidence>
<comment type="function">
    <text evidence="1">Produces ATP from ADP in the presence of a proton gradient across the membrane. The gamma chain is believed to be important in regulating ATPase activity and the flow of protons through the CF(0) complex.</text>
</comment>
<comment type="subunit">
    <text evidence="1">F-type ATPases have 2 components, CF(1) - the catalytic core - and CF(0) - the membrane proton channel. CF(1) has five subunits: alpha(3), beta(3), gamma(1), delta(1), epsilon(1). CF(0) has three main subunits: a, b and c.</text>
</comment>
<comment type="subcellular location">
    <subcellularLocation>
        <location evidence="1">Cell inner membrane</location>
        <topology evidence="1">Peripheral membrane protein</topology>
    </subcellularLocation>
</comment>
<comment type="similarity">
    <text evidence="1">Belongs to the ATPase gamma chain family.</text>
</comment>
<sequence length="283" mass="32231">MANLKALFLRMKSVKSIQKTTKVMQMISAAKLRQVQQRLNNARMHMLELSKIIDTNVVTKNNECTGPHNKKDILLVIMSSDRGLCGNFNNMIVKFAKSYIEELESCGKNVKLLFFGKVAYNMMCSQYSSKILDVFSNIQSITDFLSFKLFLYGSGVDFNQFIGVMVLFNKFYTTILQKPTVEQLMPCNIDISVSLKEYYKYEPAYLNVLSTMSLSYILNLMYIAFLENCASEHSSRVIAMESANNNTKEMLSKLVLQYNRSRQAAITTDLIEVISGFESLGNQ</sequence>
<name>ATPG_EHRRW</name>
<keyword id="KW-0066">ATP synthesis</keyword>
<keyword id="KW-0997">Cell inner membrane</keyword>
<keyword id="KW-1003">Cell membrane</keyword>
<keyword id="KW-0139">CF(1)</keyword>
<keyword id="KW-0375">Hydrogen ion transport</keyword>
<keyword id="KW-0406">Ion transport</keyword>
<keyword id="KW-0472">Membrane</keyword>
<keyword id="KW-0813">Transport</keyword>
<reference key="1">
    <citation type="journal article" date="2005" name="Proc. Natl. Acad. Sci. U.S.A.">
        <title>The genome of the heartwater agent Ehrlichia ruminantium contains multiple tandem repeats of actively variable copy number.</title>
        <authorList>
            <person name="Collins N.E."/>
            <person name="Liebenberg J."/>
            <person name="de Villiers E.P."/>
            <person name="Brayton K.A."/>
            <person name="Louw E."/>
            <person name="Pretorius A."/>
            <person name="Faber F.E."/>
            <person name="van Heerden H."/>
            <person name="Josemans A."/>
            <person name="van Kleef M."/>
            <person name="Steyn H.C."/>
            <person name="van Strijp M.F."/>
            <person name="Zweygarth E."/>
            <person name="Jongejan F."/>
            <person name="Maillard J.C."/>
            <person name="Berthier D."/>
            <person name="Botha M."/>
            <person name="Joubert F."/>
            <person name="Corton C.H."/>
            <person name="Thomson N.R."/>
            <person name="Allsopp M.T."/>
            <person name="Allsopp B.A."/>
        </authorList>
    </citation>
    <scope>NUCLEOTIDE SEQUENCE [LARGE SCALE GENOMIC DNA]</scope>
    <source>
        <strain>Welgevonden</strain>
    </source>
</reference>
<reference key="2">
    <citation type="journal article" date="2006" name="J. Bacteriol.">
        <title>Comparative genomic analysis of three strains of Ehrlichia ruminantium reveals an active process of genome size plasticity.</title>
        <authorList>
            <person name="Frutos R."/>
            <person name="Viari A."/>
            <person name="Ferraz C."/>
            <person name="Morgat A."/>
            <person name="Eychenie S."/>
            <person name="Kandassamy Y."/>
            <person name="Chantal I."/>
            <person name="Bensaid A."/>
            <person name="Coissac E."/>
            <person name="Vachiery N."/>
            <person name="Demaille J."/>
            <person name="Martinez D."/>
        </authorList>
    </citation>
    <scope>NUCLEOTIDE SEQUENCE [LARGE SCALE GENOMIC DNA]</scope>
    <source>
        <strain>Welgevonden</strain>
    </source>
</reference>
<organism>
    <name type="scientific">Ehrlichia ruminantium (strain Welgevonden)</name>
    <dbReference type="NCBI Taxonomy" id="254945"/>
    <lineage>
        <taxon>Bacteria</taxon>
        <taxon>Pseudomonadati</taxon>
        <taxon>Pseudomonadota</taxon>
        <taxon>Alphaproteobacteria</taxon>
        <taxon>Rickettsiales</taxon>
        <taxon>Anaplasmataceae</taxon>
        <taxon>Ehrlichia</taxon>
    </lineage>
</organism>
<protein>
    <recommendedName>
        <fullName evidence="1">ATP synthase gamma chain</fullName>
    </recommendedName>
    <alternativeName>
        <fullName evidence="1">ATP synthase F1 sector gamma subunit</fullName>
    </alternativeName>
    <alternativeName>
        <fullName evidence="1">F-ATPase gamma subunit</fullName>
    </alternativeName>
</protein>
<feature type="chain" id="PRO_0000073278" description="ATP synthase gamma chain">
    <location>
        <begin position="1"/>
        <end position="283"/>
    </location>
</feature>
<proteinExistence type="inferred from homology"/>